<accession>A1TD55</accession>
<keyword id="KW-0066">ATP synthesis</keyword>
<keyword id="KW-0067">ATP-binding</keyword>
<keyword id="KW-1003">Cell membrane</keyword>
<keyword id="KW-0139">CF(1)</keyword>
<keyword id="KW-0375">Hydrogen ion transport</keyword>
<keyword id="KW-0406">Ion transport</keyword>
<keyword id="KW-0472">Membrane</keyword>
<keyword id="KW-0547">Nucleotide-binding</keyword>
<keyword id="KW-1278">Translocase</keyword>
<keyword id="KW-0813">Transport</keyword>
<gene>
    <name evidence="1" type="primary">atpD</name>
    <name type="ordered locus">Mvan_4328</name>
</gene>
<sequence>MTATAEKTAGRVVRITGPVVDVEFPRGSVPELFNALHAEISYKDLSKTLTLEVAQHLGDNLVRTISMQPTDGLVRGVEVTDTGTSISVPVGDGVKGHVFNALGDCLDEPGYGKDFEHWSIHRKPPAFADLEPRTEMLETGLKVVDLLTPYVRGGKIALFGGAGVGKTVLIQEMINRIARNFGGTSVFAGVGERTREGNDLWVELADANVLKDTALVFGQMDEPPGTRMRVALSALTMAEFFRDEQGQDVLLFIDNIFRFTQAGSEVSTLLGRMPSAVGYQPTLADEMGELQERITSTRGKSITSMQAVYVPADDYTDPAPATTFAHLDATTELSRAVFSKGIFPAVDPLASSSTILDPAVVGDEHYRVAQEVIRILQRYKDLQDIIAILGIDELAEEDKQLVQRARRIERFLSQNMMAAEQFTGQPGSTVPLKETIEAFDKLTKGDFDHLPEQAFFLIGGLDDLAKKAESLGAKL</sequence>
<organism>
    <name type="scientific">Mycolicibacterium vanbaalenii (strain DSM 7251 / JCM 13017 / BCRC 16820 / KCTC 9966 / NRRL B-24157 / PYR-1)</name>
    <name type="common">Mycobacterium vanbaalenii</name>
    <dbReference type="NCBI Taxonomy" id="350058"/>
    <lineage>
        <taxon>Bacteria</taxon>
        <taxon>Bacillati</taxon>
        <taxon>Actinomycetota</taxon>
        <taxon>Actinomycetes</taxon>
        <taxon>Mycobacteriales</taxon>
        <taxon>Mycobacteriaceae</taxon>
        <taxon>Mycolicibacterium</taxon>
    </lineage>
</organism>
<comment type="function">
    <text evidence="1">Produces ATP from ADP in the presence of a proton gradient across the membrane. The catalytic sites are hosted primarily by the beta subunits.</text>
</comment>
<comment type="catalytic activity">
    <reaction evidence="1">
        <text>ATP + H2O + 4 H(+)(in) = ADP + phosphate + 5 H(+)(out)</text>
        <dbReference type="Rhea" id="RHEA:57720"/>
        <dbReference type="ChEBI" id="CHEBI:15377"/>
        <dbReference type="ChEBI" id="CHEBI:15378"/>
        <dbReference type="ChEBI" id="CHEBI:30616"/>
        <dbReference type="ChEBI" id="CHEBI:43474"/>
        <dbReference type="ChEBI" id="CHEBI:456216"/>
        <dbReference type="EC" id="7.1.2.2"/>
    </reaction>
</comment>
<comment type="subunit">
    <text evidence="1">F-type ATPases have 2 components, CF(1) - the catalytic core - and CF(0) - the membrane proton channel. CF(1) has five subunits: alpha(3), beta(3), gamma(1), delta(1), epsilon(1). CF(0) has three main subunits: a(1), b(2) and c(9-12). The alpha and beta chains form an alternating ring which encloses part of the gamma chain. CF(1) is attached to CF(0) by a central stalk formed by the gamma and epsilon chains, while a peripheral stalk is formed by the delta and b chains.</text>
</comment>
<comment type="subcellular location">
    <subcellularLocation>
        <location evidence="1">Cell membrane</location>
        <topology evidence="1">Peripheral membrane protein</topology>
    </subcellularLocation>
</comment>
<comment type="similarity">
    <text evidence="1">Belongs to the ATPase alpha/beta chains family.</text>
</comment>
<dbReference type="EC" id="7.1.2.2" evidence="1"/>
<dbReference type="EMBL" id="CP000511">
    <property type="protein sequence ID" value="ABM15105.1"/>
    <property type="molecule type" value="Genomic_DNA"/>
</dbReference>
<dbReference type="RefSeq" id="WP_011781483.1">
    <property type="nucleotide sequence ID" value="NZ_JACKSD010000061.1"/>
</dbReference>
<dbReference type="SMR" id="A1TD55"/>
<dbReference type="STRING" id="350058.Mvan_4328"/>
<dbReference type="KEGG" id="mva:Mvan_4328"/>
<dbReference type="eggNOG" id="COG0055">
    <property type="taxonomic scope" value="Bacteria"/>
</dbReference>
<dbReference type="HOGENOM" id="CLU_022398_0_2_11"/>
<dbReference type="Proteomes" id="UP000009159">
    <property type="component" value="Chromosome"/>
</dbReference>
<dbReference type="GO" id="GO:0005886">
    <property type="term" value="C:plasma membrane"/>
    <property type="evidence" value="ECO:0007669"/>
    <property type="project" value="UniProtKB-SubCell"/>
</dbReference>
<dbReference type="GO" id="GO:0045259">
    <property type="term" value="C:proton-transporting ATP synthase complex"/>
    <property type="evidence" value="ECO:0007669"/>
    <property type="project" value="UniProtKB-KW"/>
</dbReference>
<dbReference type="GO" id="GO:0005524">
    <property type="term" value="F:ATP binding"/>
    <property type="evidence" value="ECO:0007669"/>
    <property type="project" value="UniProtKB-UniRule"/>
</dbReference>
<dbReference type="GO" id="GO:0016887">
    <property type="term" value="F:ATP hydrolysis activity"/>
    <property type="evidence" value="ECO:0007669"/>
    <property type="project" value="InterPro"/>
</dbReference>
<dbReference type="GO" id="GO:0046933">
    <property type="term" value="F:proton-transporting ATP synthase activity, rotational mechanism"/>
    <property type="evidence" value="ECO:0007669"/>
    <property type="project" value="UniProtKB-UniRule"/>
</dbReference>
<dbReference type="CDD" id="cd18110">
    <property type="entry name" value="ATP-synt_F1_beta_C"/>
    <property type="match status" value="1"/>
</dbReference>
<dbReference type="CDD" id="cd18115">
    <property type="entry name" value="ATP-synt_F1_beta_N"/>
    <property type="match status" value="1"/>
</dbReference>
<dbReference type="CDD" id="cd01133">
    <property type="entry name" value="F1-ATPase_beta_CD"/>
    <property type="match status" value="1"/>
</dbReference>
<dbReference type="FunFam" id="1.10.1140.10:FF:000001">
    <property type="entry name" value="ATP synthase subunit beta"/>
    <property type="match status" value="1"/>
</dbReference>
<dbReference type="FunFam" id="2.40.10.170:FF:000005">
    <property type="entry name" value="ATP synthase subunit beta"/>
    <property type="match status" value="1"/>
</dbReference>
<dbReference type="FunFam" id="3.40.50.300:FF:000004">
    <property type="entry name" value="ATP synthase subunit beta"/>
    <property type="match status" value="1"/>
</dbReference>
<dbReference type="Gene3D" id="2.40.10.170">
    <property type="match status" value="1"/>
</dbReference>
<dbReference type="Gene3D" id="1.10.1140.10">
    <property type="entry name" value="Bovine Mitochondrial F1-atpase, Atp Synthase Beta Chain, Chain D, domain 3"/>
    <property type="match status" value="1"/>
</dbReference>
<dbReference type="Gene3D" id="3.40.50.300">
    <property type="entry name" value="P-loop containing nucleotide triphosphate hydrolases"/>
    <property type="match status" value="1"/>
</dbReference>
<dbReference type="HAMAP" id="MF_01347">
    <property type="entry name" value="ATP_synth_beta_bact"/>
    <property type="match status" value="1"/>
</dbReference>
<dbReference type="InterPro" id="IPR003593">
    <property type="entry name" value="AAA+_ATPase"/>
</dbReference>
<dbReference type="InterPro" id="IPR055190">
    <property type="entry name" value="ATP-synt_VA_C"/>
</dbReference>
<dbReference type="InterPro" id="IPR005722">
    <property type="entry name" value="ATP_synth_F1_bsu"/>
</dbReference>
<dbReference type="InterPro" id="IPR020003">
    <property type="entry name" value="ATPase_a/bsu_AS"/>
</dbReference>
<dbReference type="InterPro" id="IPR050053">
    <property type="entry name" value="ATPase_alpha/beta_chains"/>
</dbReference>
<dbReference type="InterPro" id="IPR004100">
    <property type="entry name" value="ATPase_F1/V1/A1_a/bsu_N"/>
</dbReference>
<dbReference type="InterPro" id="IPR036121">
    <property type="entry name" value="ATPase_F1/V1/A1_a/bsu_N_sf"/>
</dbReference>
<dbReference type="InterPro" id="IPR000194">
    <property type="entry name" value="ATPase_F1/V1/A1_a/bsu_nucl-bd"/>
</dbReference>
<dbReference type="InterPro" id="IPR024034">
    <property type="entry name" value="ATPase_F1/V1_b/a_C"/>
</dbReference>
<dbReference type="InterPro" id="IPR027417">
    <property type="entry name" value="P-loop_NTPase"/>
</dbReference>
<dbReference type="NCBIfam" id="TIGR01039">
    <property type="entry name" value="atpD"/>
    <property type="match status" value="1"/>
</dbReference>
<dbReference type="PANTHER" id="PTHR15184">
    <property type="entry name" value="ATP SYNTHASE"/>
    <property type="match status" value="1"/>
</dbReference>
<dbReference type="PANTHER" id="PTHR15184:SF71">
    <property type="entry name" value="ATP SYNTHASE SUBUNIT BETA, MITOCHONDRIAL"/>
    <property type="match status" value="1"/>
</dbReference>
<dbReference type="Pfam" id="PF00006">
    <property type="entry name" value="ATP-synt_ab"/>
    <property type="match status" value="1"/>
</dbReference>
<dbReference type="Pfam" id="PF02874">
    <property type="entry name" value="ATP-synt_ab_N"/>
    <property type="match status" value="1"/>
</dbReference>
<dbReference type="Pfam" id="PF22919">
    <property type="entry name" value="ATP-synt_VA_C"/>
    <property type="match status" value="1"/>
</dbReference>
<dbReference type="SMART" id="SM00382">
    <property type="entry name" value="AAA"/>
    <property type="match status" value="1"/>
</dbReference>
<dbReference type="SUPFAM" id="SSF47917">
    <property type="entry name" value="C-terminal domain of alpha and beta subunits of F1 ATP synthase"/>
    <property type="match status" value="1"/>
</dbReference>
<dbReference type="SUPFAM" id="SSF50615">
    <property type="entry name" value="N-terminal domain of alpha and beta subunits of F1 ATP synthase"/>
    <property type="match status" value="1"/>
</dbReference>
<dbReference type="SUPFAM" id="SSF52540">
    <property type="entry name" value="P-loop containing nucleoside triphosphate hydrolases"/>
    <property type="match status" value="1"/>
</dbReference>
<dbReference type="PROSITE" id="PS00152">
    <property type="entry name" value="ATPASE_ALPHA_BETA"/>
    <property type="match status" value="1"/>
</dbReference>
<evidence type="ECO:0000255" key="1">
    <source>
        <dbReference type="HAMAP-Rule" id="MF_01347"/>
    </source>
</evidence>
<feature type="chain" id="PRO_0000339553" description="ATP synthase subunit beta">
    <location>
        <begin position="1"/>
        <end position="475"/>
    </location>
</feature>
<feature type="binding site" evidence="1">
    <location>
        <begin position="160"/>
        <end position="167"/>
    </location>
    <ligand>
        <name>ATP</name>
        <dbReference type="ChEBI" id="CHEBI:30616"/>
    </ligand>
</feature>
<name>ATPB_MYCVP</name>
<proteinExistence type="inferred from homology"/>
<reference key="1">
    <citation type="submission" date="2006-12" db="EMBL/GenBank/DDBJ databases">
        <title>Complete sequence of Mycobacterium vanbaalenii PYR-1.</title>
        <authorList>
            <consortium name="US DOE Joint Genome Institute"/>
            <person name="Copeland A."/>
            <person name="Lucas S."/>
            <person name="Lapidus A."/>
            <person name="Barry K."/>
            <person name="Detter J.C."/>
            <person name="Glavina del Rio T."/>
            <person name="Hammon N."/>
            <person name="Israni S."/>
            <person name="Dalin E."/>
            <person name="Tice H."/>
            <person name="Pitluck S."/>
            <person name="Singan V."/>
            <person name="Schmutz J."/>
            <person name="Larimer F."/>
            <person name="Land M."/>
            <person name="Hauser L."/>
            <person name="Kyrpides N."/>
            <person name="Anderson I.J."/>
            <person name="Miller C."/>
            <person name="Richardson P."/>
        </authorList>
    </citation>
    <scope>NUCLEOTIDE SEQUENCE [LARGE SCALE GENOMIC DNA]</scope>
    <source>
        <strain>DSM 7251 / JCM 13017 / BCRC 16820 / KCTC 9966 / NRRL B-24157 / PYR-1</strain>
    </source>
</reference>
<protein>
    <recommendedName>
        <fullName evidence="1">ATP synthase subunit beta</fullName>
        <ecNumber evidence="1">7.1.2.2</ecNumber>
    </recommendedName>
    <alternativeName>
        <fullName evidence="1">ATP synthase F1 sector subunit beta</fullName>
    </alternativeName>
    <alternativeName>
        <fullName evidence="1">F-ATPase subunit beta</fullName>
    </alternativeName>
</protein>